<comment type="function">
    <text evidence="1">Can catalyze the hydrolysis of ATP in the presence of single-stranded DNA, the ATP-dependent uptake of single-stranded DNA by duplex DNA, and the ATP-dependent hybridization of homologous single-stranded DNAs. It interacts with LexA causing its activation and leading to its autocatalytic cleavage.</text>
</comment>
<comment type="subcellular location">
    <subcellularLocation>
        <location evidence="1">Cytoplasm</location>
    </subcellularLocation>
</comment>
<comment type="similarity">
    <text evidence="1">Belongs to the RecA family.</text>
</comment>
<feature type="chain" id="PRO_0000122749" description="Protein RecA">
    <location>
        <begin position="1"/>
        <end position="348"/>
    </location>
</feature>
<feature type="region of interest" description="Disordered" evidence="2">
    <location>
        <begin position="325"/>
        <end position="348"/>
    </location>
</feature>
<feature type="compositionally biased region" description="Basic and acidic residues" evidence="2">
    <location>
        <begin position="325"/>
        <end position="335"/>
    </location>
</feature>
<feature type="binding site" evidence="1">
    <location>
        <begin position="64"/>
        <end position="71"/>
    </location>
    <ligand>
        <name>ATP</name>
        <dbReference type="ChEBI" id="CHEBI:30616"/>
    </ligand>
</feature>
<organism>
    <name type="scientific">Listeria monocytogenes serovar 1/2a (strain ATCC BAA-679 / EGD-e)</name>
    <dbReference type="NCBI Taxonomy" id="169963"/>
    <lineage>
        <taxon>Bacteria</taxon>
        <taxon>Bacillati</taxon>
        <taxon>Bacillota</taxon>
        <taxon>Bacilli</taxon>
        <taxon>Bacillales</taxon>
        <taxon>Listeriaceae</taxon>
        <taxon>Listeria</taxon>
    </lineage>
</organism>
<evidence type="ECO:0000255" key="1">
    <source>
        <dbReference type="HAMAP-Rule" id="MF_00268"/>
    </source>
</evidence>
<evidence type="ECO:0000256" key="2">
    <source>
        <dbReference type="SAM" id="MobiDB-lite"/>
    </source>
</evidence>
<keyword id="KW-0067">ATP-binding</keyword>
<keyword id="KW-0963">Cytoplasm</keyword>
<keyword id="KW-0227">DNA damage</keyword>
<keyword id="KW-0233">DNA recombination</keyword>
<keyword id="KW-0234">DNA repair</keyword>
<keyword id="KW-0238">DNA-binding</keyword>
<keyword id="KW-0547">Nucleotide-binding</keyword>
<keyword id="KW-1185">Reference proteome</keyword>
<keyword id="KW-0742">SOS response</keyword>
<reference key="1">
    <citation type="journal article" date="2001" name="Science">
        <title>Comparative genomics of Listeria species.</title>
        <authorList>
            <person name="Glaser P."/>
            <person name="Frangeul L."/>
            <person name="Buchrieser C."/>
            <person name="Rusniok C."/>
            <person name="Amend A."/>
            <person name="Baquero F."/>
            <person name="Berche P."/>
            <person name="Bloecker H."/>
            <person name="Brandt P."/>
            <person name="Chakraborty T."/>
            <person name="Charbit A."/>
            <person name="Chetouani F."/>
            <person name="Couve E."/>
            <person name="de Daruvar A."/>
            <person name="Dehoux P."/>
            <person name="Domann E."/>
            <person name="Dominguez-Bernal G."/>
            <person name="Duchaud E."/>
            <person name="Durant L."/>
            <person name="Dussurget O."/>
            <person name="Entian K.-D."/>
            <person name="Fsihi H."/>
            <person name="Garcia-del Portillo F."/>
            <person name="Garrido P."/>
            <person name="Gautier L."/>
            <person name="Goebel W."/>
            <person name="Gomez-Lopez N."/>
            <person name="Hain T."/>
            <person name="Hauf J."/>
            <person name="Jackson D."/>
            <person name="Jones L.-M."/>
            <person name="Kaerst U."/>
            <person name="Kreft J."/>
            <person name="Kuhn M."/>
            <person name="Kunst F."/>
            <person name="Kurapkat G."/>
            <person name="Madueno E."/>
            <person name="Maitournam A."/>
            <person name="Mata Vicente J."/>
            <person name="Ng E."/>
            <person name="Nedjari H."/>
            <person name="Nordsiek G."/>
            <person name="Novella S."/>
            <person name="de Pablos B."/>
            <person name="Perez-Diaz J.-C."/>
            <person name="Purcell R."/>
            <person name="Remmel B."/>
            <person name="Rose M."/>
            <person name="Schlueter T."/>
            <person name="Simoes N."/>
            <person name="Tierrez A."/>
            <person name="Vazquez-Boland J.-A."/>
            <person name="Voss H."/>
            <person name="Wehland J."/>
            <person name="Cossart P."/>
        </authorList>
    </citation>
    <scope>NUCLEOTIDE SEQUENCE [LARGE SCALE GENOMIC DNA]</scope>
    <source>
        <strain>ATCC BAA-679 / EGD-e</strain>
    </source>
</reference>
<proteinExistence type="inferred from homology"/>
<gene>
    <name evidence="1" type="primary">recA</name>
    <name type="ordered locus">lmo1398</name>
</gene>
<name>RECA_LISMO</name>
<dbReference type="EMBL" id="AL591979">
    <property type="protein sequence ID" value="CAC99476.1"/>
    <property type="molecule type" value="Genomic_DNA"/>
</dbReference>
<dbReference type="PIR" id="AF1249">
    <property type="entry name" value="AF1249"/>
</dbReference>
<dbReference type="RefSeq" id="NP_464923.1">
    <property type="nucleotide sequence ID" value="NC_003210.1"/>
</dbReference>
<dbReference type="RefSeq" id="WP_003732286.1">
    <property type="nucleotide sequence ID" value="NZ_CP149495.1"/>
</dbReference>
<dbReference type="SMR" id="P0DJP0"/>
<dbReference type="STRING" id="169963.gene:17594055"/>
<dbReference type="PaxDb" id="169963-lmo1398"/>
<dbReference type="EnsemblBacteria" id="CAC99476">
    <property type="protein sequence ID" value="CAC99476"/>
    <property type="gene ID" value="CAC99476"/>
</dbReference>
<dbReference type="GeneID" id="984485"/>
<dbReference type="KEGG" id="lmo:lmo1398"/>
<dbReference type="PATRIC" id="fig|169963.11.peg.1437"/>
<dbReference type="eggNOG" id="COG0468">
    <property type="taxonomic scope" value="Bacteria"/>
</dbReference>
<dbReference type="HOGENOM" id="CLU_040469_3_2_9"/>
<dbReference type="OrthoDB" id="9776733at2"/>
<dbReference type="PhylomeDB" id="P0DJP0"/>
<dbReference type="BioCyc" id="LMON169963:LMO1398-MONOMER"/>
<dbReference type="Proteomes" id="UP000000817">
    <property type="component" value="Chromosome"/>
</dbReference>
<dbReference type="GO" id="GO:0005737">
    <property type="term" value="C:cytoplasm"/>
    <property type="evidence" value="ECO:0007669"/>
    <property type="project" value="UniProtKB-SubCell"/>
</dbReference>
<dbReference type="GO" id="GO:0005524">
    <property type="term" value="F:ATP binding"/>
    <property type="evidence" value="ECO:0007669"/>
    <property type="project" value="UniProtKB-UniRule"/>
</dbReference>
<dbReference type="GO" id="GO:0016887">
    <property type="term" value="F:ATP hydrolysis activity"/>
    <property type="evidence" value="ECO:0007669"/>
    <property type="project" value="InterPro"/>
</dbReference>
<dbReference type="GO" id="GO:0140664">
    <property type="term" value="F:ATP-dependent DNA damage sensor activity"/>
    <property type="evidence" value="ECO:0007669"/>
    <property type="project" value="InterPro"/>
</dbReference>
<dbReference type="GO" id="GO:0003684">
    <property type="term" value="F:damaged DNA binding"/>
    <property type="evidence" value="ECO:0007669"/>
    <property type="project" value="UniProtKB-UniRule"/>
</dbReference>
<dbReference type="GO" id="GO:0003697">
    <property type="term" value="F:single-stranded DNA binding"/>
    <property type="evidence" value="ECO:0007669"/>
    <property type="project" value="UniProtKB-UniRule"/>
</dbReference>
<dbReference type="GO" id="GO:0006310">
    <property type="term" value="P:DNA recombination"/>
    <property type="evidence" value="ECO:0007669"/>
    <property type="project" value="UniProtKB-UniRule"/>
</dbReference>
<dbReference type="GO" id="GO:0006281">
    <property type="term" value="P:DNA repair"/>
    <property type="evidence" value="ECO:0007669"/>
    <property type="project" value="UniProtKB-UniRule"/>
</dbReference>
<dbReference type="GO" id="GO:0009432">
    <property type="term" value="P:SOS response"/>
    <property type="evidence" value="ECO:0000269"/>
    <property type="project" value="CollecTF"/>
</dbReference>
<dbReference type="CDD" id="cd00983">
    <property type="entry name" value="RecA"/>
    <property type="match status" value="1"/>
</dbReference>
<dbReference type="FunFam" id="3.40.50.300:FF:000087">
    <property type="entry name" value="Recombinase RecA"/>
    <property type="match status" value="1"/>
</dbReference>
<dbReference type="Gene3D" id="3.40.50.300">
    <property type="entry name" value="P-loop containing nucleotide triphosphate hydrolases"/>
    <property type="match status" value="1"/>
</dbReference>
<dbReference type="HAMAP" id="MF_00268">
    <property type="entry name" value="RecA"/>
    <property type="match status" value="1"/>
</dbReference>
<dbReference type="InterPro" id="IPR003593">
    <property type="entry name" value="AAA+_ATPase"/>
</dbReference>
<dbReference type="InterPro" id="IPR013765">
    <property type="entry name" value="DNA_recomb/repair_RecA"/>
</dbReference>
<dbReference type="InterPro" id="IPR020584">
    <property type="entry name" value="DNA_recomb/repair_RecA_CS"/>
</dbReference>
<dbReference type="InterPro" id="IPR027417">
    <property type="entry name" value="P-loop_NTPase"/>
</dbReference>
<dbReference type="InterPro" id="IPR049261">
    <property type="entry name" value="RecA-like_C"/>
</dbReference>
<dbReference type="InterPro" id="IPR049428">
    <property type="entry name" value="RecA-like_N"/>
</dbReference>
<dbReference type="InterPro" id="IPR020588">
    <property type="entry name" value="RecA_ATP-bd"/>
</dbReference>
<dbReference type="InterPro" id="IPR023400">
    <property type="entry name" value="RecA_C_sf"/>
</dbReference>
<dbReference type="InterPro" id="IPR020587">
    <property type="entry name" value="RecA_monomer-monomer_interface"/>
</dbReference>
<dbReference type="NCBIfam" id="TIGR02012">
    <property type="entry name" value="tigrfam_recA"/>
    <property type="match status" value="1"/>
</dbReference>
<dbReference type="PANTHER" id="PTHR45900:SF1">
    <property type="entry name" value="MITOCHONDRIAL DNA REPAIR PROTEIN RECA HOMOLOG-RELATED"/>
    <property type="match status" value="1"/>
</dbReference>
<dbReference type="PANTHER" id="PTHR45900">
    <property type="entry name" value="RECA"/>
    <property type="match status" value="1"/>
</dbReference>
<dbReference type="Pfam" id="PF00154">
    <property type="entry name" value="RecA"/>
    <property type="match status" value="1"/>
</dbReference>
<dbReference type="Pfam" id="PF21096">
    <property type="entry name" value="RecA_C"/>
    <property type="match status" value="1"/>
</dbReference>
<dbReference type="PRINTS" id="PR00142">
    <property type="entry name" value="RECA"/>
</dbReference>
<dbReference type="SMART" id="SM00382">
    <property type="entry name" value="AAA"/>
    <property type="match status" value="1"/>
</dbReference>
<dbReference type="SUPFAM" id="SSF52540">
    <property type="entry name" value="P-loop containing nucleoside triphosphate hydrolases"/>
    <property type="match status" value="1"/>
</dbReference>
<dbReference type="SUPFAM" id="SSF54752">
    <property type="entry name" value="RecA protein, C-terminal domain"/>
    <property type="match status" value="1"/>
</dbReference>
<dbReference type="PROSITE" id="PS00321">
    <property type="entry name" value="RECA_1"/>
    <property type="match status" value="1"/>
</dbReference>
<dbReference type="PROSITE" id="PS50162">
    <property type="entry name" value="RECA_2"/>
    <property type="match status" value="1"/>
</dbReference>
<dbReference type="PROSITE" id="PS50163">
    <property type="entry name" value="RECA_3"/>
    <property type="match status" value="1"/>
</dbReference>
<accession>P0DJP0</accession>
<accession>Q9L723</accession>
<sequence length="348" mass="37994">MNDRQAALDQALKQIEKQFGKGSIMKLGEHSDQNISTISSGSLALDIALGVGGYPRGRIIEVYGPESSGKTTVALHAIAEVQAQGGTAAFIDAEHALDPAYAKNLGVNIDELLLSQPDTGEQALEIAEALVRSGAVDMLVIDSVAALVPRAEIEGEMGDAHVGLQARLMSQALRKLSGVINKSKTIAIFINQIREKVGVMFGNPEITPGGRALKFYSTVRLEVRRAEQLKQGTDVMGNKTKIKVVKNKVAPPFRIAEVDIMYGEGISREGELVDMAAEVDVINKSGSWYSYKEERIGQGRENAKQYLKEHTDIRDEISKRVREEYEIDGSSKEPLDEKEETLSLLDDE</sequence>
<protein>
    <recommendedName>
        <fullName evidence="1">Protein RecA</fullName>
    </recommendedName>
    <alternativeName>
        <fullName evidence="1">Recombinase A</fullName>
    </alternativeName>
</protein>